<accession>C6EVG6</accession>
<sequence length="183" mass="19544">MQMDWLFIAVVSAIGLLSSGVPGTQGAYTTEQCRALNGTCRFYACFPKNVVIGKCDWLGWGCCARTPLERCTAKKGTCTASGCTETDTDHGPCDGGAQCCQRDPVKYCKFHGNVCGRGKCPMDHIPIGEQCMPGYPCCKRDGPAYCKSKGGKCLRRCSQIVPTDIIGVCADGVPCCKSRQSTG</sequence>
<feature type="signal peptide" evidence="1">
    <location>
        <begin position="1"/>
        <end position="26"/>
    </location>
</feature>
<feature type="chain" id="PRO_0000414106" description="Helofensin-1">
    <location>
        <begin position="27"/>
        <end position="183"/>
    </location>
</feature>
<feature type="repeat" description="C(6)C(4)C(9)C(6)CC 1; approximate">
    <location>
        <begin position="27"/>
        <end position="64"/>
    </location>
</feature>
<feature type="repeat" description="C(6)C(4)C(9)C(6)CC 2; approximate">
    <location>
        <begin position="65"/>
        <end position="101"/>
    </location>
</feature>
<feature type="repeat" description="C(6)C(4)C(9)C(6)CC 3; approximate">
    <location>
        <begin position="102"/>
        <end position="139"/>
    </location>
</feature>
<feature type="repeat" description="C(6)C(4)C(9)C(6)CC 4; approximate">
    <location>
        <begin position="140"/>
        <end position="177"/>
    </location>
</feature>
<evidence type="ECO:0000250" key="1"/>
<evidence type="ECO:0000305" key="2"/>
<organism>
    <name type="scientific">Heloderma suspectum cinctum</name>
    <name type="common">Banded Gila monster</name>
    <dbReference type="NCBI Taxonomy" id="537493"/>
    <lineage>
        <taxon>Eukaryota</taxon>
        <taxon>Metazoa</taxon>
        <taxon>Chordata</taxon>
        <taxon>Craniata</taxon>
        <taxon>Vertebrata</taxon>
        <taxon>Euteleostomi</taxon>
        <taxon>Lepidosauria</taxon>
        <taxon>Squamata</taxon>
        <taxon>Bifurcata</taxon>
        <taxon>Unidentata</taxon>
        <taxon>Episquamata</taxon>
        <taxon>Toxicofera</taxon>
        <taxon>Anguimorpha</taxon>
        <taxon>Neoanguimorpha</taxon>
        <taxon>Helodermatidae</taxon>
        <taxon>Heloderma</taxon>
    </lineage>
</organism>
<protein>
    <recommendedName>
        <fullName>Helofensin-1</fullName>
    </recommendedName>
    <alternativeName>
        <fullName>Lethal toxin 1</fullName>
    </alternativeName>
</protein>
<proteinExistence type="evidence at transcript level"/>
<reference key="1">
    <citation type="journal article" date="2010" name="Mol. Biol. Evol.">
        <title>Novel venom proteins produced by differential domain-expression strategies in beaded lizards and gila monsters (genus Heloderma).</title>
        <authorList>
            <person name="Fry B.G."/>
            <person name="Roelants K."/>
            <person name="Winter K."/>
            <person name="Hodgson W.C."/>
            <person name="Griesman L."/>
            <person name="Kwok H.F."/>
            <person name="Scanlon D."/>
            <person name="Karas J."/>
            <person name="Shaw C."/>
            <person name="Wong L."/>
            <person name="Norman J.A."/>
        </authorList>
    </citation>
    <scope>NUCLEOTIDE SEQUENCE [MRNA]</scope>
    <source>
        <tissue>Venom gland</tissue>
    </source>
</reference>
<name>LETH1_HELSC</name>
<dbReference type="EMBL" id="EU790964">
    <property type="protein sequence ID" value="ACE95066.1"/>
    <property type="molecule type" value="mRNA"/>
</dbReference>
<dbReference type="SMR" id="C6EVG6"/>
<dbReference type="TCDB" id="1.C.85.4.1">
    <property type="family name" value="the pore-forming Beta-defensin (Beta-defensin) family"/>
</dbReference>
<dbReference type="GO" id="GO:0005576">
    <property type="term" value="C:extracellular region"/>
    <property type="evidence" value="ECO:0007669"/>
    <property type="project" value="UniProtKB-SubCell"/>
</dbReference>
<dbReference type="GO" id="GO:0090729">
    <property type="term" value="F:toxin activity"/>
    <property type="evidence" value="ECO:0007669"/>
    <property type="project" value="UniProtKB-KW"/>
</dbReference>
<dbReference type="GO" id="GO:0006952">
    <property type="term" value="P:defense response"/>
    <property type="evidence" value="ECO:0007669"/>
    <property type="project" value="InterPro"/>
</dbReference>
<dbReference type="InterPro" id="IPR001855">
    <property type="entry name" value="Defensin_beta-like"/>
</dbReference>
<dbReference type="Pfam" id="PF00711">
    <property type="entry name" value="Defensin_beta"/>
    <property type="match status" value="1"/>
</dbReference>
<dbReference type="SUPFAM" id="SSF57392">
    <property type="entry name" value="Defensin-like"/>
    <property type="match status" value="1"/>
</dbReference>
<keyword id="KW-0677">Repeat</keyword>
<keyword id="KW-0964">Secreted</keyword>
<keyword id="KW-0732">Signal</keyword>
<keyword id="KW-0800">Toxin</keyword>
<comment type="function">
    <text evidence="1">Lethal toxin which possesses an inhibitory effect on direct electrical stimulation of the isolated hemi-diaphragm of mice. Neither hemorrhagic nor hemolytic activities are detected. Phospholipase A2 activity, proteolytic activity and arginine esterolytic activity are absent (By similarity).</text>
</comment>
<comment type="subcellular location">
    <subcellularLocation>
        <location evidence="1">Secreted</location>
    </subcellularLocation>
</comment>
<comment type="tissue specificity">
    <text>Expressed by the mandibular venom gland.</text>
</comment>
<comment type="similarity">
    <text evidence="2">Belongs to the beta-defensin family. Helofensin subfamily.</text>
</comment>